<reference key="1">
    <citation type="journal article" date="2002" name="Nature">
        <title>The genome sequence and structure of rice chromosome 1.</title>
        <authorList>
            <person name="Sasaki T."/>
            <person name="Matsumoto T."/>
            <person name="Yamamoto K."/>
            <person name="Sakata K."/>
            <person name="Baba T."/>
            <person name="Katayose Y."/>
            <person name="Wu J."/>
            <person name="Niimura Y."/>
            <person name="Cheng Z."/>
            <person name="Nagamura Y."/>
            <person name="Antonio B.A."/>
            <person name="Kanamori H."/>
            <person name="Hosokawa S."/>
            <person name="Masukawa M."/>
            <person name="Arikawa K."/>
            <person name="Chiden Y."/>
            <person name="Hayashi M."/>
            <person name="Okamoto M."/>
            <person name="Ando T."/>
            <person name="Aoki H."/>
            <person name="Arita K."/>
            <person name="Hamada M."/>
            <person name="Harada C."/>
            <person name="Hijishita S."/>
            <person name="Honda M."/>
            <person name="Ichikawa Y."/>
            <person name="Idonuma A."/>
            <person name="Iijima M."/>
            <person name="Ikeda M."/>
            <person name="Ikeno M."/>
            <person name="Ito S."/>
            <person name="Ito T."/>
            <person name="Ito Y."/>
            <person name="Ito Y."/>
            <person name="Iwabuchi A."/>
            <person name="Kamiya K."/>
            <person name="Karasawa W."/>
            <person name="Katagiri S."/>
            <person name="Kikuta A."/>
            <person name="Kobayashi N."/>
            <person name="Kono I."/>
            <person name="Machita K."/>
            <person name="Maehara T."/>
            <person name="Mizuno H."/>
            <person name="Mizubayashi T."/>
            <person name="Mukai Y."/>
            <person name="Nagasaki H."/>
            <person name="Nakashima M."/>
            <person name="Nakama Y."/>
            <person name="Nakamichi Y."/>
            <person name="Nakamura M."/>
            <person name="Namiki N."/>
            <person name="Negishi M."/>
            <person name="Ohta I."/>
            <person name="Ono N."/>
            <person name="Saji S."/>
            <person name="Sakai K."/>
            <person name="Shibata M."/>
            <person name="Shimokawa T."/>
            <person name="Shomura A."/>
            <person name="Song J."/>
            <person name="Takazaki Y."/>
            <person name="Terasawa K."/>
            <person name="Tsuji K."/>
            <person name="Waki K."/>
            <person name="Yamagata H."/>
            <person name="Yamane H."/>
            <person name="Yoshiki S."/>
            <person name="Yoshihara R."/>
            <person name="Yukawa K."/>
            <person name="Zhong H."/>
            <person name="Iwama H."/>
            <person name="Endo T."/>
            <person name="Ito H."/>
            <person name="Hahn J.H."/>
            <person name="Kim H.-I."/>
            <person name="Eun M.-Y."/>
            <person name="Yano M."/>
            <person name="Jiang J."/>
            <person name="Gojobori T."/>
        </authorList>
    </citation>
    <scope>NUCLEOTIDE SEQUENCE [LARGE SCALE GENOMIC DNA]</scope>
    <source>
        <strain>cv. Nipponbare</strain>
    </source>
</reference>
<reference key="2">
    <citation type="journal article" date="2005" name="Nature">
        <title>The map-based sequence of the rice genome.</title>
        <authorList>
            <consortium name="International rice genome sequencing project (IRGSP)"/>
        </authorList>
    </citation>
    <scope>NUCLEOTIDE SEQUENCE [LARGE SCALE GENOMIC DNA]</scope>
    <source>
        <strain>cv. Nipponbare</strain>
    </source>
</reference>
<reference key="3">
    <citation type="journal article" date="2008" name="Nucleic Acids Res.">
        <title>The rice annotation project database (RAP-DB): 2008 update.</title>
        <authorList>
            <consortium name="The rice annotation project (RAP)"/>
        </authorList>
    </citation>
    <scope>GENOME REANNOTATION</scope>
    <source>
        <strain>cv. Nipponbare</strain>
    </source>
</reference>
<reference key="4">
    <citation type="journal article" date="2013" name="Rice">
        <title>Improvement of the Oryza sativa Nipponbare reference genome using next generation sequence and optical map data.</title>
        <authorList>
            <person name="Kawahara Y."/>
            <person name="de la Bastide M."/>
            <person name="Hamilton J.P."/>
            <person name="Kanamori H."/>
            <person name="McCombie W.R."/>
            <person name="Ouyang S."/>
            <person name="Schwartz D.C."/>
            <person name="Tanaka T."/>
            <person name="Wu J."/>
            <person name="Zhou S."/>
            <person name="Childs K.L."/>
            <person name="Davidson R.M."/>
            <person name="Lin H."/>
            <person name="Quesada-Ocampo L."/>
            <person name="Vaillancourt B."/>
            <person name="Sakai H."/>
            <person name="Lee S.S."/>
            <person name="Kim J."/>
            <person name="Numa H."/>
            <person name="Itoh T."/>
            <person name="Buell C.R."/>
            <person name="Matsumoto T."/>
        </authorList>
    </citation>
    <scope>GENOME REANNOTATION</scope>
    <source>
        <strain>cv. Nipponbare</strain>
    </source>
</reference>
<reference key="5">
    <citation type="journal article" date="2005" name="PLoS Biol.">
        <title>The genomes of Oryza sativa: a history of duplications.</title>
        <authorList>
            <person name="Yu J."/>
            <person name="Wang J."/>
            <person name="Lin W."/>
            <person name="Li S."/>
            <person name="Li H."/>
            <person name="Zhou J."/>
            <person name="Ni P."/>
            <person name="Dong W."/>
            <person name="Hu S."/>
            <person name="Zeng C."/>
            <person name="Zhang J."/>
            <person name="Zhang Y."/>
            <person name="Li R."/>
            <person name="Xu Z."/>
            <person name="Li S."/>
            <person name="Li X."/>
            <person name="Zheng H."/>
            <person name="Cong L."/>
            <person name="Lin L."/>
            <person name="Yin J."/>
            <person name="Geng J."/>
            <person name="Li G."/>
            <person name="Shi J."/>
            <person name="Liu J."/>
            <person name="Lv H."/>
            <person name="Li J."/>
            <person name="Wang J."/>
            <person name="Deng Y."/>
            <person name="Ran L."/>
            <person name="Shi X."/>
            <person name="Wang X."/>
            <person name="Wu Q."/>
            <person name="Li C."/>
            <person name="Ren X."/>
            <person name="Wang J."/>
            <person name="Wang X."/>
            <person name="Li D."/>
            <person name="Liu D."/>
            <person name="Zhang X."/>
            <person name="Ji Z."/>
            <person name="Zhao W."/>
            <person name="Sun Y."/>
            <person name="Zhang Z."/>
            <person name="Bao J."/>
            <person name="Han Y."/>
            <person name="Dong L."/>
            <person name="Ji J."/>
            <person name="Chen P."/>
            <person name="Wu S."/>
            <person name="Liu J."/>
            <person name="Xiao Y."/>
            <person name="Bu D."/>
            <person name="Tan J."/>
            <person name="Yang L."/>
            <person name="Ye C."/>
            <person name="Zhang J."/>
            <person name="Xu J."/>
            <person name="Zhou Y."/>
            <person name="Yu Y."/>
            <person name="Zhang B."/>
            <person name="Zhuang S."/>
            <person name="Wei H."/>
            <person name="Liu B."/>
            <person name="Lei M."/>
            <person name="Yu H."/>
            <person name="Li Y."/>
            <person name="Xu H."/>
            <person name="Wei S."/>
            <person name="He X."/>
            <person name="Fang L."/>
            <person name="Zhang Z."/>
            <person name="Zhang Y."/>
            <person name="Huang X."/>
            <person name="Su Z."/>
            <person name="Tong W."/>
            <person name="Li J."/>
            <person name="Tong Z."/>
            <person name="Li S."/>
            <person name="Ye J."/>
            <person name="Wang L."/>
            <person name="Fang L."/>
            <person name="Lei T."/>
            <person name="Chen C.-S."/>
            <person name="Chen H.-C."/>
            <person name="Xu Z."/>
            <person name="Li H."/>
            <person name="Huang H."/>
            <person name="Zhang F."/>
            <person name="Xu H."/>
            <person name="Li N."/>
            <person name="Zhao C."/>
            <person name="Li S."/>
            <person name="Dong L."/>
            <person name="Huang Y."/>
            <person name="Li L."/>
            <person name="Xi Y."/>
            <person name="Qi Q."/>
            <person name="Li W."/>
            <person name="Zhang B."/>
            <person name="Hu W."/>
            <person name="Zhang Y."/>
            <person name="Tian X."/>
            <person name="Jiao Y."/>
            <person name="Liang X."/>
            <person name="Jin J."/>
            <person name="Gao L."/>
            <person name="Zheng W."/>
            <person name="Hao B."/>
            <person name="Liu S.-M."/>
            <person name="Wang W."/>
            <person name="Yuan L."/>
            <person name="Cao M."/>
            <person name="McDermott J."/>
            <person name="Samudrala R."/>
            <person name="Wang J."/>
            <person name="Wong G.K.-S."/>
            <person name="Yang H."/>
        </authorList>
    </citation>
    <scope>NUCLEOTIDE SEQUENCE [LARGE SCALE GENOMIC DNA]</scope>
    <source>
        <strain>cv. Nipponbare</strain>
    </source>
</reference>
<reference key="6">
    <citation type="journal article" date="2003" name="Science">
        <title>Collection, mapping, and annotation of over 28,000 cDNA clones from japonica rice.</title>
        <authorList>
            <consortium name="The rice full-length cDNA consortium"/>
        </authorList>
    </citation>
    <scope>NUCLEOTIDE SEQUENCE [LARGE SCALE MRNA]</scope>
    <source>
        <strain>cv. Nipponbare</strain>
    </source>
</reference>
<gene>
    <name type="ordered locus">Os01g0928800</name>
    <name type="ordered locus">LOC_Os01g70380</name>
    <name type="ORF">OsJ_04635</name>
    <name type="ORF">OSJNBa0052O12.15</name>
</gene>
<feature type="chain" id="PRO_0000419153" description="Long chain base biosynthesis protein 2d">
    <location>
        <begin position="1"/>
        <end position="489"/>
    </location>
</feature>
<feature type="transmembrane region" description="Helical" evidence="2">
    <location>
        <begin position="4"/>
        <end position="24"/>
    </location>
</feature>
<feature type="modified residue" description="N6-(pyridoxal phosphate)lysine" evidence="1">
    <location>
        <position position="311"/>
    </location>
</feature>
<protein>
    <recommendedName>
        <fullName>Long chain base biosynthesis protein 2d</fullName>
        <ecNumber>2.3.1.50</ecNumber>
    </recommendedName>
</protein>
<dbReference type="EC" id="2.3.1.50"/>
<dbReference type="EMBL" id="AP004330">
    <property type="protein sequence ID" value="BAD88168.1"/>
    <property type="molecule type" value="Genomic_DNA"/>
</dbReference>
<dbReference type="EMBL" id="AP008207">
    <property type="protein sequence ID" value="BAF07193.1"/>
    <property type="molecule type" value="Genomic_DNA"/>
</dbReference>
<dbReference type="EMBL" id="AP014957">
    <property type="protein sequence ID" value="BAS76016.1"/>
    <property type="molecule type" value="Genomic_DNA"/>
</dbReference>
<dbReference type="EMBL" id="CM000138">
    <property type="protein sequence ID" value="EEE55940.1"/>
    <property type="molecule type" value="Genomic_DNA"/>
</dbReference>
<dbReference type="EMBL" id="AK120617">
    <property type="protein sequence ID" value="BAH00095.1"/>
    <property type="molecule type" value="mRNA"/>
</dbReference>
<dbReference type="RefSeq" id="XP_015613397.1">
    <property type="nucleotide sequence ID" value="XM_015757911.1"/>
</dbReference>
<dbReference type="SMR" id="Q5JK39"/>
<dbReference type="FunCoup" id="Q5JK39">
    <property type="interactions" value="1959"/>
</dbReference>
<dbReference type="STRING" id="39947.Q5JK39"/>
<dbReference type="PaxDb" id="39947-Q5JK39"/>
<dbReference type="EnsemblPlants" id="Os01t0928800-01">
    <property type="protein sequence ID" value="Os01t0928800-01"/>
    <property type="gene ID" value="Os01g0928800"/>
</dbReference>
<dbReference type="Gramene" id="Os01t0928800-01">
    <property type="protein sequence ID" value="Os01t0928800-01"/>
    <property type="gene ID" value="Os01g0928800"/>
</dbReference>
<dbReference type="KEGG" id="dosa:Os01g0928800"/>
<dbReference type="eggNOG" id="KOG1357">
    <property type="taxonomic scope" value="Eukaryota"/>
</dbReference>
<dbReference type="HOGENOM" id="CLU_015846_7_0_1"/>
<dbReference type="InParanoid" id="Q5JK39"/>
<dbReference type="OMA" id="QPRANGC"/>
<dbReference type="OrthoDB" id="65434at2759"/>
<dbReference type="PlantReactome" id="R-OSA-1119325">
    <property type="pathway name" value="Sphingolipid metabolism"/>
</dbReference>
<dbReference type="PlantReactome" id="R-OSA-1119610">
    <property type="pathway name" value="Biotin biosynthesis II"/>
</dbReference>
<dbReference type="UniPathway" id="UPA00222"/>
<dbReference type="Proteomes" id="UP000000763">
    <property type="component" value="Chromosome 1"/>
</dbReference>
<dbReference type="Proteomes" id="UP000007752">
    <property type="component" value="Chromosome 1"/>
</dbReference>
<dbReference type="Proteomes" id="UP000059680">
    <property type="component" value="Chromosome 1"/>
</dbReference>
<dbReference type="GO" id="GO:0005789">
    <property type="term" value="C:endoplasmic reticulum membrane"/>
    <property type="evidence" value="ECO:0007669"/>
    <property type="project" value="UniProtKB-SubCell"/>
</dbReference>
<dbReference type="GO" id="GO:0017059">
    <property type="term" value="C:serine palmitoyltransferase complex"/>
    <property type="evidence" value="ECO:0000318"/>
    <property type="project" value="GO_Central"/>
</dbReference>
<dbReference type="GO" id="GO:0030170">
    <property type="term" value="F:pyridoxal phosphate binding"/>
    <property type="evidence" value="ECO:0007669"/>
    <property type="project" value="InterPro"/>
</dbReference>
<dbReference type="GO" id="GO:0004758">
    <property type="term" value="F:serine C-palmitoyltransferase activity"/>
    <property type="evidence" value="ECO:0000318"/>
    <property type="project" value="GO_Central"/>
</dbReference>
<dbReference type="GO" id="GO:0046513">
    <property type="term" value="P:ceramide biosynthetic process"/>
    <property type="evidence" value="ECO:0000318"/>
    <property type="project" value="GO_Central"/>
</dbReference>
<dbReference type="GO" id="GO:0046512">
    <property type="term" value="P:sphingosine biosynthetic process"/>
    <property type="evidence" value="ECO:0000318"/>
    <property type="project" value="GO_Central"/>
</dbReference>
<dbReference type="CDD" id="cd06454">
    <property type="entry name" value="KBL_like"/>
    <property type="match status" value="1"/>
</dbReference>
<dbReference type="Gene3D" id="3.90.1150.10">
    <property type="entry name" value="Aspartate Aminotransferase, domain 1"/>
    <property type="match status" value="1"/>
</dbReference>
<dbReference type="Gene3D" id="3.40.640.10">
    <property type="entry name" value="Type I PLP-dependent aspartate aminotransferase-like (Major domain)"/>
    <property type="match status" value="1"/>
</dbReference>
<dbReference type="InterPro" id="IPR001917">
    <property type="entry name" value="Aminotrans_II_pyridoxalP_BS"/>
</dbReference>
<dbReference type="InterPro" id="IPR004839">
    <property type="entry name" value="Aminotransferase_I/II_large"/>
</dbReference>
<dbReference type="InterPro" id="IPR050087">
    <property type="entry name" value="AON_synthase_class-II"/>
</dbReference>
<dbReference type="InterPro" id="IPR015424">
    <property type="entry name" value="PyrdxlP-dep_Trfase"/>
</dbReference>
<dbReference type="InterPro" id="IPR015421">
    <property type="entry name" value="PyrdxlP-dep_Trfase_major"/>
</dbReference>
<dbReference type="InterPro" id="IPR015422">
    <property type="entry name" value="PyrdxlP-dep_Trfase_small"/>
</dbReference>
<dbReference type="PANTHER" id="PTHR13693">
    <property type="entry name" value="CLASS II AMINOTRANSFERASE/8-AMINO-7-OXONONANOATE SYNTHASE"/>
    <property type="match status" value="1"/>
</dbReference>
<dbReference type="PANTHER" id="PTHR13693:SF104">
    <property type="entry name" value="LONG CHAIN BASE BIOSYNTHESIS PROTEIN 2B"/>
    <property type="match status" value="1"/>
</dbReference>
<dbReference type="Pfam" id="PF00155">
    <property type="entry name" value="Aminotran_1_2"/>
    <property type="match status" value="1"/>
</dbReference>
<dbReference type="SUPFAM" id="SSF53383">
    <property type="entry name" value="PLP-dependent transferases"/>
    <property type="match status" value="1"/>
</dbReference>
<dbReference type="PROSITE" id="PS00599">
    <property type="entry name" value="AA_TRANSFER_CLASS_2"/>
    <property type="match status" value="1"/>
</dbReference>
<evidence type="ECO:0000250" key="1"/>
<evidence type="ECO:0000255" key="2"/>
<evidence type="ECO:0000305" key="3"/>
<sequence length="489" mass="53700">MVRLPYVTALTTLFSYGLLFAFGQLRDFFRRILDAGKSSNLKGYAPICLGLEDFYTRRLYLRIQDCFGRPIASAPDAWFDVVERYSNDSNKTLHRTTKTSKCLNLGSYNYLGFAAADEYCTPRVIESLKKYSASTCSVRVDGGNTKLHVELEELVARFVGKPAAILFGMGYVTNSAIIPALVGKGGLIISDSLNHNSIVNGARGSGATVRVFQHNNPAHLEEVLREQIAGGQPRTHRPWKKIIVIVEGIYSMEGELCKLPEVIAVCKKYKAYTYLDEAHSIGAVGKTGRGVCELLGVDPADVDIMMGTFTKSFGSCGGYIAASKEIIDHLKHICPAHIYATSMSPPAVQQVISAIKVILGEDGSNRGAKKLAQIRENSNFFRSELQKMGFEVLGDNDSPVMPIMLYNPAKIPAFSRECLRQHVAVVTVAFPATPLLLARARICISASHSREDLIKGLEVISKVGDLVGIKYFPVEHEKTASVEKLKKLQ</sequence>
<name>LCB2D_ORYSJ</name>
<proteinExistence type="evidence at transcript level"/>
<comment type="function">
    <text evidence="1">Serine palmitoyltransferase (SPT). The heterodimer formed with LCB1 constitutes the catalytic core (By similarity).</text>
</comment>
<comment type="catalytic activity">
    <reaction>
        <text>L-serine + hexadecanoyl-CoA + H(+) = 3-oxosphinganine + CO2 + CoA</text>
        <dbReference type="Rhea" id="RHEA:14761"/>
        <dbReference type="ChEBI" id="CHEBI:15378"/>
        <dbReference type="ChEBI" id="CHEBI:16526"/>
        <dbReference type="ChEBI" id="CHEBI:33384"/>
        <dbReference type="ChEBI" id="CHEBI:57287"/>
        <dbReference type="ChEBI" id="CHEBI:57379"/>
        <dbReference type="ChEBI" id="CHEBI:58299"/>
        <dbReference type="EC" id="2.3.1.50"/>
    </reaction>
</comment>
<comment type="cofactor">
    <cofactor evidence="1">
        <name>pyridoxal 5'-phosphate</name>
        <dbReference type="ChEBI" id="CHEBI:597326"/>
    </cofactor>
</comment>
<comment type="pathway">
    <text>Lipid metabolism; sphingolipid metabolism.</text>
</comment>
<comment type="subunit">
    <text evidence="1">Heterodimer with LCB1. Component of the serine palmitoyltransferase (SPT) complex, composed of LCB1 and LCB2 (By similarity).</text>
</comment>
<comment type="subcellular location">
    <subcellularLocation>
        <location evidence="1">Endoplasmic reticulum membrane</location>
        <topology evidence="1">Single-pass membrane protein</topology>
    </subcellularLocation>
</comment>
<comment type="similarity">
    <text evidence="3">Belongs to the class-II pyridoxal-phosphate-dependent aminotransferase family.</text>
</comment>
<organism>
    <name type="scientific">Oryza sativa subsp. japonica</name>
    <name type="common">Rice</name>
    <dbReference type="NCBI Taxonomy" id="39947"/>
    <lineage>
        <taxon>Eukaryota</taxon>
        <taxon>Viridiplantae</taxon>
        <taxon>Streptophyta</taxon>
        <taxon>Embryophyta</taxon>
        <taxon>Tracheophyta</taxon>
        <taxon>Spermatophyta</taxon>
        <taxon>Magnoliopsida</taxon>
        <taxon>Liliopsida</taxon>
        <taxon>Poales</taxon>
        <taxon>Poaceae</taxon>
        <taxon>BOP clade</taxon>
        <taxon>Oryzoideae</taxon>
        <taxon>Oryzeae</taxon>
        <taxon>Oryzinae</taxon>
        <taxon>Oryza</taxon>
        <taxon>Oryza sativa</taxon>
    </lineage>
</organism>
<accession>Q5JK39</accession>
<accession>A0A0P0VCB6</accession>
<keyword id="KW-0012">Acyltransferase</keyword>
<keyword id="KW-0256">Endoplasmic reticulum</keyword>
<keyword id="KW-0443">Lipid metabolism</keyword>
<keyword id="KW-0472">Membrane</keyword>
<keyword id="KW-0663">Pyridoxal phosphate</keyword>
<keyword id="KW-1185">Reference proteome</keyword>
<keyword id="KW-0746">Sphingolipid metabolism</keyword>
<keyword id="KW-0808">Transferase</keyword>
<keyword id="KW-0812">Transmembrane</keyword>
<keyword id="KW-1133">Transmembrane helix</keyword>